<dbReference type="EMBL" id="FJ571519">
    <property type="protein sequence ID" value="ACY30467.1"/>
    <property type="molecule type" value="mRNA"/>
</dbReference>
<dbReference type="EMBL" id="AAGW02000522">
    <property type="status" value="NOT_ANNOTATED_CDS"/>
    <property type="molecule type" value="Genomic_DNA"/>
</dbReference>
<dbReference type="EMBL" id="AF091849">
    <property type="protein sequence ID" value="AAC61771.1"/>
    <property type="molecule type" value="mRNA"/>
</dbReference>
<dbReference type="EMBL" id="D17404">
    <property type="protein sequence ID" value="BAA04227.1"/>
    <property type="molecule type" value="mRNA"/>
</dbReference>
<dbReference type="PIR" id="I46861">
    <property type="entry name" value="I46861"/>
</dbReference>
<dbReference type="RefSeq" id="NP_001243402.1">
    <property type="nucleotide sequence ID" value="NM_001256473.1"/>
</dbReference>
<dbReference type="RefSeq" id="XP_017200972.1">
    <property type="nucleotide sequence ID" value="XM_017345483.1"/>
</dbReference>
<dbReference type="SMR" id="P50117"/>
<dbReference type="FunCoup" id="P50117">
    <property type="interactions" value="95"/>
</dbReference>
<dbReference type="STRING" id="9986.ENSOCUP00000007456"/>
<dbReference type="PaxDb" id="9986-ENSOCUP00000007456"/>
<dbReference type="Ensembl" id="ENSOCUT00000008626.4">
    <property type="protein sequence ID" value="ENSOCUP00000007456.4"/>
    <property type="gene ID" value="ENSOCUG00000008632.4"/>
</dbReference>
<dbReference type="GeneID" id="100008704"/>
<dbReference type="KEGG" id="ocu:100008704"/>
<dbReference type="CTD" id="6280"/>
<dbReference type="eggNOG" id="ENOG502SA01">
    <property type="taxonomic scope" value="Eukaryota"/>
</dbReference>
<dbReference type="GeneTree" id="ENSGT00940000161606"/>
<dbReference type="InParanoid" id="P50117"/>
<dbReference type="OrthoDB" id="9447434at2759"/>
<dbReference type="TreeFam" id="TF332727"/>
<dbReference type="Proteomes" id="UP000001811">
    <property type="component" value="Chromosome 13"/>
</dbReference>
<dbReference type="Bgee" id="ENSOCUG00000008632">
    <property type="expression patterns" value="Expressed in blood and 18 other cell types or tissues"/>
</dbReference>
<dbReference type="ExpressionAtlas" id="P50117">
    <property type="expression patterns" value="baseline"/>
</dbReference>
<dbReference type="GO" id="GO:1990660">
    <property type="term" value="C:calprotectin complex"/>
    <property type="evidence" value="ECO:0007669"/>
    <property type="project" value="Ensembl"/>
</dbReference>
<dbReference type="GO" id="GO:0005737">
    <property type="term" value="C:cytoplasm"/>
    <property type="evidence" value="ECO:0007669"/>
    <property type="project" value="UniProtKB-SubCell"/>
</dbReference>
<dbReference type="GO" id="GO:0005856">
    <property type="term" value="C:cytoskeleton"/>
    <property type="evidence" value="ECO:0007669"/>
    <property type="project" value="UniProtKB-SubCell"/>
</dbReference>
<dbReference type="GO" id="GO:0070062">
    <property type="term" value="C:extracellular exosome"/>
    <property type="evidence" value="ECO:0007669"/>
    <property type="project" value="TreeGrafter"/>
</dbReference>
<dbReference type="GO" id="GO:0005634">
    <property type="term" value="C:nucleus"/>
    <property type="evidence" value="ECO:0007669"/>
    <property type="project" value="TreeGrafter"/>
</dbReference>
<dbReference type="GO" id="GO:0005886">
    <property type="term" value="C:plasma membrane"/>
    <property type="evidence" value="ECO:0007669"/>
    <property type="project" value="UniProtKB-SubCell"/>
</dbReference>
<dbReference type="GO" id="GO:1990662">
    <property type="term" value="C:S100A9 complex"/>
    <property type="evidence" value="ECO:0007669"/>
    <property type="project" value="Ensembl"/>
</dbReference>
<dbReference type="GO" id="GO:0016209">
    <property type="term" value="F:antioxidant activity"/>
    <property type="evidence" value="ECO:0007669"/>
    <property type="project" value="UniProtKB-KW"/>
</dbReference>
<dbReference type="GO" id="GO:0005509">
    <property type="term" value="F:calcium ion binding"/>
    <property type="evidence" value="ECO:0007669"/>
    <property type="project" value="InterPro"/>
</dbReference>
<dbReference type="GO" id="GO:0048306">
    <property type="term" value="F:calcium-dependent protein binding"/>
    <property type="evidence" value="ECO:0007669"/>
    <property type="project" value="TreeGrafter"/>
</dbReference>
<dbReference type="GO" id="GO:0061844">
    <property type="term" value="P:antimicrobial humoral immune response mediated by antimicrobial peptide"/>
    <property type="evidence" value="ECO:0007669"/>
    <property type="project" value="Ensembl"/>
</dbReference>
<dbReference type="GO" id="GO:0006915">
    <property type="term" value="P:apoptotic process"/>
    <property type="evidence" value="ECO:0007669"/>
    <property type="project" value="UniProtKB-KW"/>
</dbReference>
<dbReference type="GO" id="GO:0014002">
    <property type="term" value="P:astrocyte development"/>
    <property type="evidence" value="ECO:0007669"/>
    <property type="project" value="TreeGrafter"/>
</dbReference>
<dbReference type="GO" id="GO:0035425">
    <property type="term" value="P:autocrine signaling"/>
    <property type="evidence" value="ECO:0007669"/>
    <property type="project" value="TreeGrafter"/>
</dbReference>
<dbReference type="GO" id="GO:0006914">
    <property type="term" value="P:autophagy"/>
    <property type="evidence" value="ECO:0000250"/>
    <property type="project" value="UniProtKB"/>
</dbReference>
<dbReference type="GO" id="GO:0002544">
    <property type="term" value="P:chronic inflammatory response"/>
    <property type="evidence" value="ECO:0007669"/>
    <property type="project" value="TreeGrafter"/>
</dbReference>
<dbReference type="GO" id="GO:0043542">
    <property type="term" value="P:endothelial cell migration"/>
    <property type="evidence" value="ECO:0007669"/>
    <property type="project" value="TreeGrafter"/>
</dbReference>
<dbReference type="GO" id="GO:0045087">
    <property type="term" value="P:innate immune response"/>
    <property type="evidence" value="ECO:0007669"/>
    <property type="project" value="UniProtKB-KW"/>
</dbReference>
<dbReference type="GO" id="GO:0002523">
    <property type="term" value="P:leukocyte migration involved in inflammatory response"/>
    <property type="evidence" value="ECO:0000250"/>
    <property type="project" value="UniProtKB"/>
</dbReference>
<dbReference type="GO" id="GO:0070488">
    <property type="term" value="P:neutrophil aggregation"/>
    <property type="evidence" value="ECO:0000250"/>
    <property type="project" value="UniProtKB"/>
</dbReference>
<dbReference type="GO" id="GO:0030593">
    <property type="term" value="P:neutrophil chemotaxis"/>
    <property type="evidence" value="ECO:0000250"/>
    <property type="project" value="UniProtKB"/>
</dbReference>
<dbReference type="GO" id="GO:0050729">
    <property type="term" value="P:positive regulation of inflammatory response"/>
    <property type="evidence" value="ECO:0000250"/>
    <property type="project" value="UniProtKB"/>
</dbReference>
<dbReference type="GO" id="GO:2001244">
    <property type="term" value="P:positive regulation of intrinsic apoptotic signaling pathway"/>
    <property type="evidence" value="ECO:0000250"/>
    <property type="project" value="UniProtKB"/>
</dbReference>
<dbReference type="GO" id="GO:0045113">
    <property type="term" value="P:regulation of integrin biosynthetic process"/>
    <property type="evidence" value="ECO:0007669"/>
    <property type="project" value="TreeGrafter"/>
</dbReference>
<dbReference type="GO" id="GO:0032496">
    <property type="term" value="P:response to lipopolysaccharide"/>
    <property type="evidence" value="ECO:0007669"/>
    <property type="project" value="TreeGrafter"/>
</dbReference>
<dbReference type="CDD" id="cd05030">
    <property type="entry name" value="calgranulins"/>
    <property type="match status" value="1"/>
</dbReference>
<dbReference type="FunFam" id="1.10.238.10:FF:000378">
    <property type="entry name" value="Protein S100-A9"/>
    <property type="match status" value="1"/>
</dbReference>
<dbReference type="Gene3D" id="1.10.238.10">
    <property type="entry name" value="EF-hand"/>
    <property type="match status" value="1"/>
</dbReference>
<dbReference type="InterPro" id="IPR011992">
    <property type="entry name" value="EF-hand-dom_pair"/>
</dbReference>
<dbReference type="InterPro" id="IPR018247">
    <property type="entry name" value="EF_Hand_1_Ca_BS"/>
</dbReference>
<dbReference type="InterPro" id="IPR002048">
    <property type="entry name" value="EF_hand_dom"/>
</dbReference>
<dbReference type="InterPro" id="IPR001751">
    <property type="entry name" value="S100/CaBP7/8-like_CS"/>
</dbReference>
<dbReference type="InterPro" id="IPR013787">
    <property type="entry name" value="S100_Ca-bd_sub"/>
</dbReference>
<dbReference type="PANTHER" id="PTHR11639:SF79">
    <property type="entry name" value="PROTEIN S100-A9"/>
    <property type="match status" value="1"/>
</dbReference>
<dbReference type="PANTHER" id="PTHR11639">
    <property type="entry name" value="S100 CALCIUM-BINDING PROTEIN"/>
    <property type="match status" value="1"/>
</dbReference>
<dbReference type="Pfam" id="PF01023">
    <property type="entry name" value="S_100"/>
    <property type="match status" value="1"/>
</dbReference>
<dbReference type="SMART" id="SM00054">
    <property type="entry name" value="EFh"/>
    <property type="match status" value="1"/>
</dbReference>
<dbReference type="SMART" id="SM01394">
    <property type="entry name" value="S_100"/>
    <property type="match status" value="1"/>
</dbReference>
<dbReference type="SUPFAM" id="SSF47473">
    <property type="entry name" value="EF-hand"/>
    <property type="match status" value="1"/>
</dbReference>
<dbReference type="PROSITE" id="PS00018">
    <property type="entry name" value="EF_HAND_1"/>
    <property type="match status" value="1"/>
</dbReference>
<dbReference type="PROSITE" id="PS50222">
    <property type="entry name" value="EF_HAND_2"/>
    <property type="match status" value="1"/>
</dbReference>
<dbReference type="PROSITE" id="PS00303">
    <property type="entry name" value="S100_CABP"/>
    <property type="match status" value="1"/>
</dbReference>
<proteinExistence type="evidence at transcript level"/>
<keyword id="KW-0929">Antimicrobial</keyword>
<keyword id="KW-0049">Antioxidant</keyword>
<keyword id="KW-0053">Apoptosis</keyword>
<keyword id="KW-0072">Autophagy</keyword>
<keyword id="KW-0106">Calcium</keyword>
<keyword id="KW-1003">Cell membrane</keyword>
<keyword id="KW-0145">Chemotaxis</keyword>
<keyword id="KW-0963">Cytoplasm</keyword>
<keyword id="KW-0206">Cytoskeleton</keyword>
<keyword id="KW-0391">Immunity</keyword>
<keyword id="KW-0395">Inflammatory response</keyword>
<keyword id="KW-0399">Innate immunity</keyword>
<keyword id="KW-0472">Membrane</keyword>
<keyword id="KW-0479">Metal-binding</keyword>
<keyword id="KW-0488">Methylation</keyword>
<keyword id="KW-0597">Phosphoprotein</keyword>
<keyword id="KW-1185">Reference proteome</keyword>
<keyword id="KW-0677">Repeat</keyword>
<keyword id="KW-0702">S-nitrosylation</keyword>
<keyword id="KW-0964">Secreted</keyword>
<keyword id="KW-0862">Zinc</keyword>
<accession>P50117</accession>
<accession>G1SVJ6</accession>
<accession>G8XUT3</accession>
<reference key="1">
    <citation type="submission" date="2008-12" db="EMBL/GenBank/DDBJ databases">
        <title>Cloning, characterization, and functional identification of a new calgranulin gene from Oryctolagus cuniculus.</title>
        <authorList>
            <person name="Liu Y."/>
            <person name="Chu T."/>
        </authorList>
    </citation>
    <scope>NUCLEOTIDE SEQUENCE [MRNA]</scope>
</reference>
<reference key="2">
    <citation type="submission" date="2009-08" db="EMBL/GenBank/DDBJ databases">
        <title>Genome Sequence of Oryctolagus cuniculus (European rabbit).</title>
        <authorList>
            <consortium name="The Genome Sequencing Platform"/>
            <person name="Di Palma F."/>
            <person name="Heiman D."/>
            <person name="Young S."/>
            <person name="Gnerre S."/>
            <person name="Johnson J."/>
            <person name="Lander E.S."/>
            <person name="Lindblad-Toh K."/>
        </authorList>
    </citation>
    <scope>NUCLEOTIDE SEQUENCE [LARGE SCALE GENOMIC DNA]</scope>
    <source>
        <strain>Thorbecke</strain>
    </source>
</reference>
<reference key="3">
    <citation type="journal article" date="1996" name="J. Biol. Chem.">
        <title>Rabbit polymorphonuclear neutrophils form 35S-labeled S-sulfo-calgranulin C when incubated with inorganic [35S]sulfate.</title>
        <authorList>
            <person name="Yang Z."/>
            <person name="de Veer M.J."/>
            <person name="Gardiner E.E."/>
            <person name="Devenish R.J."/>
            <person name="Handley C.J."/>
            <person name="Underwood J.R."/>
            <person name="Robinson H.C."/>
        </authorList>
    </citation>
    <scope>NUCLEOTIDE SEQUENCE [MRNA] OF 15-132</scope>
    <source>
        <strain>New Zealand white</strain>
        <tissue>Neutrophil</tissue>
    </source>
</reference>
<reference key="4">
    <citation type="journal article" date="1994" name="Int. Immunol.">
        <title>Dynamic changes in mRNA expression of neutrophils during the course of acute inflammation in rabbits.</title>
        <authorList>
            <person name="Mori S."/>
            <person name="Goto K."/>
            <person name="Goto F."/>
            <person name="Mutakami K."/>
            <person name="Ohkawara S."/>
            <person name="Yoshinaga M."/>
        </authorList>
    </citation>
    <scope>NUCLEOTIDE SEQUENCE [MRNA] OF 59-96</scope>
    <source>
        <strain>New Zealand white</strain>
    </source>
</reference>
<protein>
    <recommendedName>
        <fullName>Protein S100-A9</fullName>
    </recommendedName>
    <alternativeName>
        <fullName>Calgranulin-B</fullName>
    </alternativeName>
    <alternativeName>
        <fullName>Migration inhibitory factor-related protein 14</fullName>
        <shortName>MRP-14</shortName>
        <shortName>p14</shortName>
    </alternativeName>
    <alternativeName>
        <fullName>S100 calcium-binding protein A9</fullName>
    </alternativeName>
</protein>
<feature type="chain" id="PRO_0000144000" description="Protein S100-A9">
    <location>
        <begin position="1"/>
        <end position="132"/>
    </location>
</feature>
<feature type="domain" description="EF-hand 1" evidence="6">
    <location>
        <begin position="26"/>
        <end position="61"/>
    </location>
</feature>
<feature type="domain" description="EF-hand 2" evidence="4">
    <location>
        <begin position="54"/>
        <end position="89"/>
    </location>
</feature>
<feature type="repeat" description="1">
    <location>
        <begin position="117"/>
        <end position="124"/>
    </location>
</feature>
<feature type="repeat" description="2">
    <location>
        <begin position="125"/>
        <end position="132"/>
    </location>
</feature>
<feature type="region of interest" description="Disordered" evidence="5">
    <location>
        <begin position="92"/>
        <end position="132"/>
    </location>
</feature>
<feature type="region of interest" description="2 X 8 AA tandem repeats of G-H-G-H-G-H-S-H">
    <location>
        <begin position="117"/>
        <end position="132"/>
    </location>
</feature>
<feature type="compositionally biased region" description="Basic and acidic residues" evidence="5">
    <location>
        <begin position="92"/>
        <end position="106"/>
    </location>
</feature>
<feature type="compositionally biased region" description="Gly residues" evidence="5">
    <location>
        <begin position="107"/>
        <end position="118"/>
    </location>
</feature>
<feature type="compositionally biased region" description="Basic residues" evidence="5">
    <location>
        <begin position="119"/>
        <end position="132"/>
    </location>
</feature>
<feature type="binding site" evidence="1">
    <location>
        <position position="20"/>
    </location>
    <ligand>
        <name>Zn(2+)</name>
        <dbReference type="ChEBI" id="CHEBI:29105"/>
    </ligand>
</feature>
<feature type="binding site" evidence="1">
    <location>
        <position position="23"/>
    </location>
    <ligand>
        <name>Ca(2+)</name>
        <dbReference type="ChEBI" id="CHEBI:29108"/>
        <label>1</label>
        <note>low affinity</note>
    </ligand>
</feature>
<feature type="binding site" evidence="1">
    <location>
        <position position="30"/>
    </location>
    <ligand>
        <name>Zn(2+)</name>
        <dbReference type="ChEBI" id="CHEBI:29105"/>
    </ligand>
</feature>
<feature type="binding site" evidence="1">
    <location>
        <position position="36"/>
    </location>
    <ligand>
        <name>Ca(2+)</name>
        <dbReference type="ChEBI" id="CHEBI:29108"/>
        <label>1</label>
        <note>low affinity</note>
    </ligand>
</feature>
<feature type="binding site" evidence="4">
    <location>
        <position position="67"/>
    </location>
    <ligand>
        <name>Ca(2+)</name>
        <dbReference type="ChEBI" id="CHEBI:29108"/>
        <label>2</label>
        <note>high affinity</note>
    </ligand>
</feature>
<feature type="binding site" evidence="4">
    <location>
        <position position="69"/>
    </location>
    <ligand>
        <name>Ca(2+)</name>
        <dbReference type="ChEBI" id="CHEBI:29108"/>
        <label>2</label>
        <note>high affinity</note>
    </ligand>
</feature>
<feature type="binding site" evidence="4">
    <location>
        <position position="71"/>
    </location>
    <ligand>
        <name>Ca(2+)</name>
        <dbReference type="ChEBI" id="CHEBI:29108"/>
        <label>2</label>
        <note>high affinity</note>
    </ligand>
</feature>
<feature type="binding site" evidence="4">
    <location>
        <position position="73"/>
    </location>
    <ligand>
        <name>Ca(2+)</name>
        <dbReference type="ChEBI" id="CHEBI:29108"/>
        <label>2</label>
        <note>high affinity</note>
    </ligand>
</feature>
<feature type="binding site" evidence="4">
    <location>
        <position position="78"/>
    </location>
    <ligand>
        <name>Ca(2+)</name>
        <dbReference type="ChEBI" id="CHEBI:29108"/>
        <label>2</label>
        <note>high affinity</note>
    </ligand>
</feature>
<feature type="binding site" evidence="1">
    <location>
        <position position="91"/>
    </location>
    <ligand>
        <name>Zn(2+)</name>
        <dbReference type="ChEBI" id="CHEBI:29105"/>
    </ligand>
</feature>
<feature type="binding site" evidence="1">
    <location>
        <position position="95"/>
    </location>
    <ligand>
        <name>Zn(2+)</name>
        <dbReference type="ChEBI" id="CHEBI:29105"/>
    </ligand>
</feature>
<feature type="modified residue" description="S-nitrosocysteine" evidence="1">
    <location>
        <position position="3"/>
    </location>
</feature>
<feature type="modified residue" description="Pros-methylhistidine" evidence="3">
    <location>
        <position position="107"/>
    </location>
</feature>
<feature type="sequence conflict" description="In Ref. 3; AAC61771." evidence="6" ref="3">
    <original>V</original>
    <variation>I</variation>
    <location>
        <position position="18"/>
    </location>
</feature>
<feature type="sequence conflict" description="In Ref. 3; AAC61771." evidence="6" ref="3">
    <original>G</original>
    <variation>S</variation>
    <location>
        <position position="114"/>
    </location>
</feature>
<evidence type="ECO:0000250" key="1">
    <source>
        <dbReference type="UniProtKB" id="P06702"/>
    </source>
</evidence>
<evidence type="ECO:0000250" key="2">
    <source>
        <dbReference type="UniProtKB" id="P31725"/>
    </source>
</evidence>
<evidence type="ECO:0000250" key="3">
    <source>
        <dbReference type="UniProtKB" id="P50116"/>
    </source>
</evidence>
<evidence type="ECO:0000255" key="4">
    <source>
        <dbReference type="PROSITE-ProRule" id="PRU00448"/>
    </source>
</evidence>
<evidence type="ECO:0000256" key="5">
    <source>
        <dbReference type="SAM" id="MobiDB-lite"/>
    </source>
</evidence>
<evidence type="ECO:0000305" key="6"/>
<organism>
    <name type="scientific">Oryctolagus cuniculus</name>
    <name type="common">Rabbit</name>
    <dbReference type="NCBI Taxonomy" id="9986"/>
    <lineage>
        <taxon>Eukaryota</taxon>
        <taxon>Metazoa</taxon>
        <taxon>Chordata</taxon>
        <taxon>Craniata</taxon>
        <taxon>Vertebrata</taxon>
        <taxon>Euteleostomi</taxon>
        <taxon>Mammalia</taxon>
        <taxon>Eutheria</taxon>
        <taxon>Euarchontoglires</taxon>
        <taxon>Glires</taxon>
        <taxon>Lagomorpha</taxon>
        <taxon>Leporidae</taxon>
        <taxon>Oryctolagus</taxon>
    </lineage>
</organism>
<comment type="function">
    <text evidence="1">S100A9 is a calcium- and zinc-binding protein which plays a prominent role in the regulation of inflammatory processes and immune response. It can induce neutrophil chemotaxis, adhesion, can increase the bactericidal activity of neutrophils by promoting phagocytosis via activation of SYK, PI3K/AKT, and ERK1/2 and can induce degranulation of neutrophils by a MAPK-dependent mechanism. Predominantly found as calprotectin (S100A8/A9) which has a wide plethora of intra- and extracellular functions. The intracellular functions include: facilitating leukocyte arachidonic acid trafficking and metabolism, modulation of the tubulin-dependent cytoskeleton during migration of phagocytes and activation of the neutrophilic NADPH-oxidase. Also participates in regulatory T-cell differentiation together with CD69. Activates NADPH-oxidase by facilitating the enzyme complex assembly at the cell membrane, transferring arachidonic acid, an essential cofactor, to the enzyme complex and S100A8 contributes to the enzyme assembly by directly binding to NCF2/P67PHOX. The extracellular functions involve pro-inflammatory, antimicrobial, oxidant-scavenging and apoptosis-inducing activities. Its pro-inflammatory activity includes recruitment of leukocytes, promotion of cytokine and chemokine production, and regulation of leukocyte adhesion and migration. Acts as an alarmin or a danger associated molecular pattern (DAMP) molecule and stimulates innate immune cells via binding to pattern recognition receptors such as Toll-like receptor 4 (TLR4) and receptor for advanced glycation endproducts (AGER). Binding to TLR4 and AGER activates the MAP-kinase and NF-kappa-B signaling pathways resulting in the amplification of the pro-inflammatory cascade. Has antimicrobial activity towards bacteria and fungi and exerts its antimicrobial activity probably via chelation of Zn(2+) which is essential for microbial growth. Can induce cell death via autophagy and apoptosis and this occurs through the cross-talk of mitochondria and lysosomes via reactive oxygen species (ROS) and the process involves BNIP3. Can regulate neutrophil number and apoptosis by an anti-apoptotic effect; regulates cell survival via ITGAM/ITGB and TLR4 and a signaling mechanism involving MEK-ERK. Its role as an oxidant scavenger has a protective role in preventing exaggerated tissue damage by scavenging oxidants. The iNOS-S100A8/A9 transnitrosylase complex is proposed to direct selective inflammatory stimulus-dependent S-nitrosylation of multiple targets such as GAPDH, NXA5, EZR, MSN and VIM by recognizing a [IL]-x-C-x-x-[DE] motif.</text>
</comment>
<comment type="subunit">
    <text evidence="1 2">Homodimer. Preferentially exists as a heterodimer or heterotetramer with S100A8 known as calprotectin (S100A8/A9) (By similarity). S100A9 interacts with ATP2A2 (By similarity). S100A9 interacts with AGER, and with the heterodimeric complex formed by TLR4 and LY96 in the presence of calcium and/or zinc ions. S100A9 binds quinoline-3-carboxamides in the presence of calcium and/or zinc ions. S100A9 interacts with amyloid-beta protein 40. Calprotectin (S100A8/9) interacts with CEACAM3 and tubulin filaments in a calcium-dependent manner. Heterotetrameric calprotectin (S100A8/A9) interacts with ANXA6 and associates with tubulin filaments in activated monocytes. Calprotectin (S100A8/9) interacts with NCF2/P67PHOX, RAC1, RAC2, CYBA and CYBB. Calprotectin (S100A8/9) interacts with NOS2 to form the iNOS-S100A8/A9 transnitrosylase complex; induced by LDL(ox) (By similarity). Calprotectin (S100A8/9) interacts with CD69 (By similarity).</text>
</comment>
<comment type="subcellular location">
    <subcellularLocation>
        <location evidence="1">Secreted</location>
    </subcellularLocation>
    <subcellularLocation>
        <location evidence="1">Cytoplasm</location>
    </subcellularLocation>
    <subcellularLocation>
        <location evidence="1">Cytoplasm</location>
        <location evidence="1">Cytoskeleton</location>
    </subcellularLocation>
    <subcellularLocation>
        <location evidence="1">Cell membrane</location>
        <topology evidence="1">Peripheral membrane protein</topology>
    </subcellularLocation>
    <text evidence="1">Predominantly localized in the cytoplasm. Upon elevation of the intracellular calcium level, translocated from the cytoplasm to the cytoskeleton and the cell membrane. Upon neutrophil activation or endothelial adhesion of monocytes, is secreted via a microtubule-mediated, alternative pathway.</text>
</comment>
<comment type="PTM">
    <text evidence="1">Phosphorylated. Phosphorylation inhibits activation of tubulin polymerization.</text>
</comment>
<comment type="PTM">
    <text evidence="2">Methylation at His-107 by METTL9 reduces zinc-binding without affecting heterodimerization with S100A8.</text>
</comment>
<comment type="similarity">
    <text evidence="6">Belongs to the S-100 family.</text>
</comment>
<gene>
    <name type="primary">S100A9</name>
    <name type="synonym">MRP14</name>
</gene>
<sequence>MSCGMSQLERSIDTIINVFHQYSVRVGPRDSLSQKEFKQLVQKELHNFLKKEARDEKAINDIMEDLDTNQDKQLSFEEFVILMARLVHASHEEMHKNAPHDHEGHSHGPGLGGGGPGHGHGHSHGHGHGHSH</sequence>
<name>S10A9_RABIT</name>